<name>DNF1_LOCMI</name>
<accession>P16339</accession>
<keyword id="KW-0027">Amidation</keyword>
<keyword id="KW-0903">Direct protein sequencing</keyword>
<keyword id="KW-1015">Disulfide bond</keyword>
<keyword id="KW-0372">Hormone</keyword>
<keyword id="KW-0527">Neuropeptide</keyword>
<keyword id="KW-0964">Secreted</keyword>
<evidence type="ECO:0000250" key="1">
    <source>
        <dbReference type="UniProtKB" id="P01175"/>
    </source>
</evidence>
<evidence type="ECO:0000269" key="2">
    <source>
    </source>
</evidence>
<evidence type="ECO:0000305" key="3"/>
<proteinExistence type="evidence at protein level"/>
<protein>
    <recommendedName>
        <fullName>Locupressin</fullName>
    </recommendedName>
    <alternativeName>
        <fullName>Diuretic neuropeptide F1/F2</fullName>
    </alternativeName>
</protein>
<comment type="function">
    <text>Diuretic hormone.</text>
</comment>
<comment type="subunit">
    <text>Monomer (F1) and homodimer (F2); disulfide-linked.</text>
</comment>
<comment type="subcellular location">
    <subcellularLocation>
        <location>Secreted</location>
    </subcellularLocation>
</comment>
<comment type="similarity">
    <text evidence="3">Belongs to the vasopressin/oxytocin family.</text>
</comment>
<dbReference type="PIR" id="A29477">
    <property type="entry name" value="A29477"/>
</dbReference>
<dbReference type="GO" id="GO:0005576">
    <property type="term" value="C:extracellular region"/>
    <property type="evidence" value="ECO:0007669"/>
    <property type="project" value="UniProtKB-SubCell"/>
</dbReference>
<dbReference type="GO" id="GO:0005185">
    <property type="term" value="F:neurohypophyseal hormone activity"/>
    <property type="evidence" value="ECO:0007669"/>
    <property type="project" value="InterPro"/>
</dbReference>
<dbReference type="GO" id="GO:0007218">
    <property type="term" value="P:neuropeptide signaling pathway"/>
    <property type="evidence" value="ECO:0007669"/>
    <property type="project" value="UniProtKB-KW"/>
</dbReference>
<dbReference type="InterPro" id="IPR022423">
    <property type="entry name" value="Neurohypophysial_hormone_CS"/>
</dbReference>
<dbReference type="Pfam" id="PF00220">
    <property type="entry name" value="Hormone_4"/>
    <property type="match status" value="1"/>
</dbReference>
<dbReference type="PROSITE" id="PS00264">
    <property type="entry name" value="NEUROHYPOPHYS_HORM"/>
    <property type="match status" value="1"/>
</dbReference>
<feature type="peptide" id="PRO_0000044100" description="Locupressin">
    <location>
        <begin position="1"/>
        <end position="9"/>
    </location>
</feature>
<feature type="modified residue" description="Glycine amide" evidence="2">
    <location>
        <position position="9"/>
    </location>
</feature>
<feature type="disulfide bond" evidence="1">
    <location>
        <begin position="1"/>
        <end position="6"/>
    </location>
</feature>
<feature type="disulfide bond" description="In monomeric form">
    <location>
        <begin position="1"/>
        <end position="6"/>
    </location>
</feature>
<feature type="disulfide bond" description="Interchain (with C-6); in dimeric form">
    <location>
        <position position="1"/>
    </location>
</feature>
<feature type="disulfide bond" description="Interchain (with C-1); in dimeric form">
    <location>
        <position position="6"/>
    </location>
</feature>
<reference key="1">
    <citation type="journal article" date="1987" name="Biochem. Biophys. Res. Commun.">
        <title>Identification of an arginine vasopressin-like diuretic hormone from Locusta migratoria.</title>
        <authorList>
            <person name="Proux J.P."/>
            <person name="Miller C.A."/>
            <person name="Li J.P."/>
            <person name="Carney R.L."/>
            <person name="Girardie A."/>
            <person name="Delaage M."/>
            <person name="Schooley D.A."/>
        </authorList>
    </citation>
    <scope>PROTEIN SEQUENCE</scope>
    <scope>AMIDATION AT GLY-9</scope>
    <source>
        <tissue>Subesophageal ganglion</tissue>
        <tissue>Thoracic ganglion</tissue>
    </source>
</reference>
<sequence>CLITNCPRG</sequence>
<organism>
    <name type="scientific">Locusta migratoria</name>
    <name type="common">Migratory locust</name>
    <dbReference type="NCBI Taxonomy" id="7004"/>
    <lineage>
        <taxon>Eukaryota</taxon>
        <taxon>Metazoa</taxon>
        <taxon>Ecdysozoa</taxon>
        <taxon>Arthropoda</taxon>
        <taxon>Hexapoda</taxon>
        <taxon>Insecta</taxon>
        <taxon>Pterygota</taxon>
        <taxon>Neoptera</taxon>
        <taxon>Polyneoptera</taxon>
        <taxon>Orthoptera</taxon>
        <taxon>Caelifera</taxon>
        <taxon>Acrididea</taxon>
        <taxon>Acridomorpha</taxon>
        <taxon>Acridoidea</taxon>
        <taxon>Acrididae</taxon>
        <taxon>Oedipodinae</taxon>
        <taxon>Locusta</taxon>
    </lineage>
</organism>